<dbReference type="EMBL" id="AM114193">
    <property type="protein sequence ID" value="CAJ38243.1"/>
    <property type="molecule type" value="Genomic_DNA"/>
</dbReference>
<dbReference type="RefSeq" id="WP_012034351.1">
    <property type="nucleotide sequence ID" value="NC_009464.1"/>
</dbReference>
<dbReference type="SMR" id="Q0W050"/>
<dbReference type="STRING" id="351160.LRC26"/>
<dbReference type="GeneID" id="5144411"/>
<dbReference type="KEGG" id="rci:LRC26"/>
<dbReference type="PATRIC" id="fig|351160.9.peg.25"/>
<dbReference type="eggNOG" id="arCOG04289">
    <property type="taxonomic scope" value="Archaea"/>
</dbReference>
<dbReference type="OrthoDB" id="10382at2157"/>
<dbReference type="Proteomes" id="UP000000663">
    <property type="component" value="Chromosome"/>
</dbReference>
<dbReference type="GO" id="GO:0015934">
    <property type="term" value="C:large ribosomal subunit"/>
    <property type="evidence" value="ECO:0007669"/>
    <property type="project" value="InterPro"/>
</dbReference>
<dbReference type="GO" id="GO:0019843">
    <property type="term" value="F:rRNA binding"/>
    <property type="evidence" value="ECO:0007669"/>
    <property type="project" value="UniProtKB-UniRule"/>
</dbReference>
<dbReference type="GO" id="GO:0003735">
    <property type="term" value="F:structural constituent of ribosome"/>
    <property type="evidence" value="ECO:0007669"/>
    <property type="project" value="InterPro"/>
</dbReference>
<dbReference type="GO" id="GO:0000049">
    <property type="term" value="F:tRNA binding"/>
    <property type="evidence" value="ECO:0007669"/>
    <property type="project" value="UniProtKB-KW"/>
</dbReference>
<dbReference type="GO" id="GO:0006417">
    <property type="term" value="P:regulation of translation"/>
    <property type="evidence" value="ECO:0007669"/>
    <property type="project" value="UniProtKB-KW"/>
</dbReference>
<dbReference type="GO" id="GO:0006412">
    <property type="term" value="P:translation"/>
    <property type="evidence" value="ECO:0007669"/>
    <property type="project" value="UniProtKB-UniRule"/>
</dbReference>
<dbReference type="CDD" id="cd00403">
    <property type="entry name" value="Ribosomal_L1"/>
    <property type="match status" value="1"/>
</dbReference>
<dbReference type="FunFam" id="3.40.50.790:FF:000005">
    <property type="entry name" value="50S ribosomal protein L1"/>
    <property type="match status" value="1"/>
</dbReference>
<dbReference type="Gene3D" id="3.30.190.20">
    <property type="match status" value="1"/>
</dbReference>
<dbReference type="Gene3D" id="3.40.50.790">
    <property type="match status" value="1"/>
</dbReference>
<dbReference type="HAMAP" id="MF_01318_A">
    <property type="entry name" value="Ribosomal_uL1_A"/>
    <property type="match status" value="1"/>
</dbReference>
<dbReference type="InterPro" id="IPR002143">
    <property type="entry name" value="Ribosomal_uL1"/>
</dbReference>
<dbReference type="InterPro" id="IPR023674">
    <property type="entry name" value="Ribosomal_uL1-like"/>
</dbReference>
<dbReference type="InterPro" id="IPR028364">
    <property type="entry name" value="Ribosomal_uL1/biogenesis"/>
</dbReference>
<dbReference type="InterPro" id="IPR016095">
    <property type="entry name" value="Ribosomal_uL1_3-a/b-sand"/>
</dbReference>
<dbReference type="InterPro" id="IPR023669">
    <property type="entry name" value="Ribosomal_uL1_arc"/>
</dbReference>
<dbReference type="InterPro" id="IPR023673">
    <property type="entry name" value="Ribosomal_uL1_CS"/>
</dbReference>
<dbReference type="NCBIfam" id="NF003244">
    <property type="entry name" value="PRK04203.1"/>
    <property type="match status" value="1"/>
</dbReference>
<dbReference type="PANTHER" id="PTHR36427">
    <property type="entry name" value="54S RIBOSOMAL PROTEIN L1, MITOCHONDRIAL"/>
    <property type="match status" value="1"/>
</dbReference>
<dbReference type="PANTHER" id="PTHR36427:SF3">
    <property type="entry name" value="LARGE RIBOSOMAL SUBUNIT PROTEIN UL1M"/>
    <property type="match status" value="1"/>
</dbReference>
<dbReference type="Pfam" id="PF00687">
    <property type="entry name" value="Ribosomal_L1"/>
    <property type="match status" value="1"/>
</dbReference>
<dbReference type="PIRSF" id="PIRSF002155">
    <property type="entry name" value="Ribosomal_L1"/>
    <property type="match status" value="1"/>
</dbReference>
<dbReference type="SUPFAM" id="SSF56808">
    <property type="entry name" value="Ribosomal protein L1"/>
    <property type="match status" value="1"/>
</dbReference>
<dbReference type="PROSITE" id="PS01199">
    <property type="entry name" value="RIBOSOMAL_L1"/>
    <property type="match status" value="1"/>
</dbReference>
<comment type="function">
    <text evidence="1">Binds directly to 23S rRNA. Probably involved in E site tRNA release.</text>
</comment>
<comment type="function">
    <text evidence="1">Protein L1 is also a translational repressor protein, it controls the translation of its operon by binding to its mRNA.</text>
</comment>
<comment type="subunit">
    <text evidence="1">Part of the 50S ribosomal subunit.</text>
</comment>
<comment type="similarity">
    <text evidence="1">Belongs to the universal ribosomal protein uL1 family.</text>
</comment>
<evidence type="ECO:0000255" key="1">
    <source>
        <dbReference type="HAMAP-Rule" id="MF_01318"/>
    </source>
</evidence>
<evidence type="ECO:0000305" key="2"/>
<protein>
    <recommendedName>
        <fullName evidence="1">Large ribosomal subunit protein uL1</fullName>
    </recommendedName>
    <alternativeName>
        <fullName evidence="2">50S ribosomal protein L1</fullName>
    </alternativeName>
</protein>
<feature type="chain" id="PRO_0000308157" description="Large ribosomal subunit protein uL1">
    <location>
        <begin position="1"/>
        <end position="213"/>
    </location>
</feature>
<proteinExistence type="inferred from homology"/>
<reference key="1">
    <citation type="journal article" date="2006" name="Science">
        <title>Genome of rice cluster I archaea -- the key methane producers in the rice rhizosphere.</title>
        <authorList>
            <person name="Erkel C."/>
            <person name="Kube M."/>
            <person name="Reinhardt R."/>
            <person name="Liesack W."/>
        </authorList>
    </citation>
    <scope>NUCLEOTIDE SEQUENCE [LARGE SCALE GENOMIC DNA]</scope>
    <source>
        <strain>DSM 22066 / NBRC 105507 / MRE50</strain>
    </source>
</reference>
<name>RL1_METAR</name>
<organism>
    <name type="scientific">Methanocella arvoryzae (strain DSM 22066 / NBRC 105507 / MRE50)</name>
    <dbReference type="NCBI Taxonomy" id="351160"/>
    <lineage>
        <taxon>Archaea</taxon>
        <taxon>Methanobacteriati</taxon>
        <taxon>Methanobacteriota</taxon>
        <taxon>Stenosarchaea group</taxon>
        <taxon>Methanomicrobia</taxon>
        <taxon>Methanocellales</taxon>
        <taxon>Methanocellaceae</taxon>
        <taxon>Methanocella</taxon>
    </lineage>
</organism>
<accession>Q0W050</accession>
<keyword id="KW-1185">Reference proteome</keyword>
<keyword id="KW-0678">Repressor</keyword>
<keyword id="KW-0687">Ribonucleoprotein</keyword>
<keyword id="KW-0689">Ribosomal protein</keyword>
<keyword id="KW-0694">RNA-binding</keyword>
<keyword id="KW-0699">rRNA-binding</keyword>
<keyword id="KW-0810">Translation regulation</keyword>
<keyword id="KW-0820">tRNA-binding</keyword>
<gene>
    <name evidence="1" type="primary">rpl1</name>
    <name type="ordered locus">UNCMA_00260</name>
    <name type="ORF">LRC26</name>
</gene>
<sequence length="213" mass="23361">MARKETVEAVKKALASRPKRNFSESVDLAINLKNIDMSQPKNRVDEDIILPSGLGKTIKVAVFAKGEVAVNAEKAGADYVFPPEEIEKLGADKPRAKKLASEVNFFIAETAYMPTIGKRLGTVLGPRGKMPAPLPPQADVTALITRQKKSIKIRSKDRLTFHATIGTETMTPEEIAENIDAIIKRLETKLEKGKQNIHAIYVKTTMGPAVKVM</sequence>